<name>DTX_CORBE</name>
<protein>
    <recommendedName>
        <fullName>Diphtheria toxin</fullName>
        <shortName>DT</shortName>
    </recommendedName>
    <alternativeName>
        <fullName>NAD(+)--diphthamide ADP-ribosyltransferase</fullName>
        <ecNumber>2.4.2.36</ecNumber>
    </alternativeName>
    <component>
        <recommendedName>
            <fullName>Diphtheria toxin fragment A</fullName>
        </recommendedName>
    </component>
    <component>
        <recommendedName>
            <fullName>Diphtheria toxin fragment B</fullName>
        </recommendedName>
    </component>
</protein>
<accession>P00588</accession>
<reference key="1">
    <citation type="journal article" date="1983" name="Proc. Natl. Acad. Sci. U.S.A.">
        <title>Nucleotide sequence of the structural gene for diphtheria toxin carried by corynebacteriophage beta.</title>
        <authorList>
            <person name="Greenfield L."/>
            <person name="Bjorn M.J."/>
            <person name="Horn G."/>
            <person name="Fong D."/>
            <person name="Buck G.A."/>
            <person name="Collier R.J."/>
            <person name="Kaplan D.A."/>
        </authorList>
    </citation>
    <scope>NUCLEOTIDE SEQUENCE [GENOMIC DNA]</scope>
</reference>
<reference key="2">
    <citation type="journal article" date="1979" name="J. Biol. Chem.">
        <title>The amino acid sequence of fragment A, an enzymically active fragment of diphtheria toxin. III. The chymotryptic peptides, the peptides derived by cleavage at tryptophan residues, and the complete sequence of the protein.</title>
        <authorList>
            <person name="Delange R.J."/>
            <person name="Williams L.C."/>
            <person name="Drazin R.E."/>
            <person name="Collier R.J."/>
        </authorList>
    </citation>
    <scope>PROTEIN SEQUENCE OF 33-225</scope>
</reference>
<reference key="3">
    <citation type="journal article" date="1977" name="Biochim. Biophys. Acta">
        <title>Occurrence of tryptophan in the enzymically active site of diphtheria toxin fragment A.</title>
        <authorList>
            <person name="Michel A."/>
            <person name="Dirkx J."/>
        </authorList>
    </citation>
    <scope>ACTIVE SITE TRP-185</scope>
</reference>
<reference key="4">
    <citation type="journal article" date="1991" name="J. Biol. Chem.">
        <title>Tyrosine 65 is photolabeled by 8-azidoadenine and 8-azidoadenosine at the NAD binding site of diphtheria toxin.</title>
        <authorList>
            <person name="Papini E."/>
            <person name="Santucci A."/>
            <person name="Schiavo G."/>
            <person name="Domenighini M."/>
            <person name="Neri P."/>
            <person name="Rappuoli R."/>
            <person name="Montecucco C."/>
        </authorList>
    </citation>
    <scope>ACTIVE SITE TYR-97</scope>
</reference>
<reference key="5">
    <citation type="journal article" date="1993" name="J. Biol. Chem.">
        <title>Evidence for involvement of furin in cleavage and activation of diphtheria toxin.</title>
        <authorList>
            <person name="Tsuneoka M."/>
            <person name="Nakayama K."/>
            <person name="Hatsuzawa K."/>
            <person name="Komada M."/>
            <person name="Kitamura N."/>
            <person name="Mekada E."/>
        </authorList>
    </citation>
    <scope>PROTEOLYTIC CLEAVAGE</scope>
</reference>
<reference key="6">
    <citation type="journal article" date="2008" name="J. Biol. Chem.">
        <title>Cholix toxin, a novel ADP-ribosylating factor from Vibrio cholerae.</title>
        <authorList>
            <person name="Jorgensen R."/>
            <person name="Purdy A.E."/>
            <person name="Fieldhouse R.J."/>
            <person name="Kimber M.S."/>
            <person name="Bartlett D.H."/>
            <person name="Merrill A.R."/>
        </authorList>
    </citation>
    <scope>FUNCTION AS AN ADP-RIBOSYLTRANSFERASE</scope>
</reference>
<reference key="7">
    <citation type="journal article" date="2009" name="FEMS Microbiol. Lett.">
        <title>Yeast as a tool for characterizing mono-ADP-ribosyltransferase toxins.</title>
        <authorList>
            <person name="Turgeon Z."/>
            <person name="White D."/>
            <person name="Jorgensen R."/>
            <person name="Visschedyk D."/>
            <person name="Fieldhouse R.J."/>
            <person name="Mangroo D."/>
            <person name="Merrill A.R."/>
        </authorList>
    </citation>
    <scope>FUNCTION AS A TOXIN</scope>
    <scope>FUNCTION AS AN ADP-RIBOSYLTRANSFERASE</scope>
    <scope>ACTIVITY REGULATION</scope>
    <scope>EXPRESSION IN YEAST</scope>
    <scope>MUTAGENESIS OF GLU-180</scope>
</reference>
<reference key="8">
    <citation type="journal article" date="1992" name="Nature">
        <title>The crystal structure of diphtheria toxin.</title>
        <authorList>
            <person name="Choe S."/>
            <person name="Bennett M.J."/>
            <person name="Fujii G."/>
            <person name="Curmi P.M.G."/>
            <person name="Kantardjieff K.A."/>
            <person name="Collier R.J."/>
            <person name="Eisenberg D."/>
        </authorList>
    </citation>
    <scope>X-RAY CRYSTALLOGRAPHY (2.5 ANGSTROMS)</scope>
</reference>
<reference key="9">
    <citation type="journal article" date="1996" name="Biochemistry">
        <title>Crystal structure of diphtheria toxin bound to nicotinamide adenine dinucleotide.</title>
        <authorList>
            <person name="Bell C.E."/>
            <person name="Eisenberg D."/>
        </authorList>
    </citation>
    <scope>X-RAY CRYSTALLOGRAPHY (2.3 ANGSTROMS)</scope>
</reference>
<reference key="10">
    <citation type="journal article" date="1997" name="Biochemistry">
        <title>Crystal structure of nucleotide-free diphtheria toxin.</title>
        <authorList>
            <person name="Bell C.E."/>
            <person name="Eisenberg D."/>
        </authorList>
    </citation>
    <scope>X-RAY CRYSTALLOGRAPHY (2.3 ANGSTROMS)</scope>
</reference>
<reference key="11">
    <citation type="journal article" date="1997" name="Mol. Cell">
        <title>Crystal structure of the complex of diphtheria toxin with an extracellular fragment of its receptor.</title>
        <authorList>
            <person name="Louie G.V."/>
            <person name="Yang W."/>
            <person name="Bowman M.E."/>
            <person name="Choe S."/>
        </authorList>
    </citation>
    <scope>X-RAY CRYSTALLOGRAPHY (2.65 ANGSTROMS) OF COMPLEX WITH RECEPTOR</scope>
</reference>
<sequence>MLVRGYVVSRKLFASILIGALLGIGAPPSAHAGADDVVDSSKSFVMENFSSYHGTKPGYVDSIQKGIQKPKSGTQGNYDDDWKGFYSTDNKYDAAGYSVDNENPLSGKAGGVVKVTYPGLTKVLALKVDNAETIKKELGLSLTEPLMEQVGTEEFIKRFGDGASRVVLSLPFAEGSSSVEYINNWEQAKALSVELEINFETRGKRGQDAMYEYMAQACAGNRVRRSVGSSLSCINLDWDVIRDKTKTKIESLKEHGPIKNKMSESPNKTVSEEKAKQYLEEFHQTALEHPELSELKTVTGTNPVFAGANYAAWAVNVAQVIDSETADNLEKTTAALSILPGIGSVMGIADGAVHHNTEEIVAQSIALSSLMVAQAIPLVGELVDIGFAAYNFVESIINLFQVVHNSYNRPAYSPGHKTQPFLHDGYAVSWNTVEDSIIRTGFQGESGHDIKITAENTPLPIAGVLLPTIPGKLDVNKSKTHISVNGRKIRMRCRAIDGDVTFCRPKSPVYVGNGVHANLHVAFHRSSSEKIHSNEISSDSIGVLGYQKTVDHTKVNSKLSLFFEIKS</sequence>
<evidence type="ECO:0000269" key="1">
    <source>
    </source>
</evidence>
<evidence type="ECO:0000269" key="2">
    <source>
    </source>
</evidence>
<evidence type="ECO:0000269" key="3">
    <source>
    </source>
</evidence>
<evidence type="ECO:0000269" key="4">
    <source>
    </source>
</evidence>
<evidence type="ECO:0000305" key="5"/>
<evidence type="ECO:0007829" key="6">
    <source>
        <dbReference type="PDB" id="1DTP"/>
    </source>
</evidence>
<evidence type="ECO:0007829" key="7">
    <source>
        <dbReference type="PDB" id="1F0L"/>
    </source>
</evidence>
<evidence type="ECO:0007829" key="8">
    <source>
        <dbReference type="PDB" id="1MDT"/>
    </source>
</evidence>
<evidence type="ECO:0007829" key="9">
    <source>
        <dbReference type="PDB" id="1XDT"/>
    </source>
</evidence>
<evidence type="ECO:0007829" key="10">
    <source>
        <dbReference type="PDB" id="4AE0"/>
    </source>
</evidence>
<dbReference type="EC" id="2.4.2.36"/>
<dbReference type="EMBL" id="K01722">
    <property type="protein sequence ID" value="AAA32182.1"/>
    <property type="status" value="ALT_INIT"/>
    <property type="molecule type" value="Genomic_DNA"/>
</dbReference>
<dbReference type="EMBL" id="X00703">
    <property type="protein sequence ID" value="CAA25302.1"/>
    <property type="molecule type" value="Genomic_DNA"/>
</dbReference>
<dbReference type="PDB" id="1DDT">
    <property type="method" value="X-ray"/>
    <property type="resolution" value="2.00 A"/>
    <property type="chains" value="A=33-567"/>
</dbReference>
<dbReference type="PDB" id="1DTP">
    <property type="method" value="X-ray"/>
    <property type="resolution" value="2.50 A"/>
    <property type="chains" value="A=33-222"/>
</dbReference>
<dbReference type="PDB" id="1F0L">
    <property type="method" value="X-ray"/>
    <property type="resolution" value="1.55 A"/>
    <property type="chains" value="A/B=33-567"/>
</dbReference>
<dbReference type="PDB" id="1MDT">
    <property type="method" value="X-ray"/>
    <property type="resolution" value="2.30 A"/>
    <property type="chains" value="A/B=33-567"/>
</dbReference>
<dbReference type="PDB" id="1SGK">
    <property type="method" value="X-ray"/>
    <property type="resolution" value="2.30 A"/>
    <property type="chains" value="A=33-567"/>
</dbReference>
<dbReference type="PDB" id="1TOX">
    <property type="method" value="X-ray"/>
    <property type="resolution" value="2.30 A"/>
    <property type="chains" value="A/B=33-567"/>
</dbReference>
<dbReference type="PDB" id="1XDT">
    <property type="method" value="X-ray"/>
    <property type="resolution" value="2.65 A"/>
    <property type="chains" value="T=33-567"/>
</dbReference>
<dbReference type="PDB" id="4AE0">
    <property type="method" value="X-ray"/>
    <property type="resolution" value="2.00 A"/>
    <property type="chains" value="A=33-567"/>
</dbReference>
<dbReference type="PDB" id="4AE1">
    <property type="method" value="X-ray"/>
    <property type="resolution" value="2.08 A"/>
    <property type="chains" value="A/B=33-567"/>
</dbReference>
<dbReference type="PDBsum" id="1DDT"/>
<dbReference type="PDBsum" id="1DTP"/>
<dbReference type="PDBsum" id="1F0L"/>
<dbReference type="PDBsum" id="1MDT"/>
<dbReference type="PDBsum" id="1SGK"/>
<dbReference type="PDBsum" id="1TOX"/>
<dbReference type="PDBsum" id="1XDT"/>
<dbReference type="PDBsum" id="4AE0"/>
<dbReference type="PDBsum" id="4AE1"/>
<dbReference type="BMRB" id="P00588"/>
<dbReference type="SMR" id="P00588"/>
<dbReference type="DIP" id="DIP-60031N"/>
<dbReference type="BioCyc" id="MetaCyc:MONOMER-15583"/>
<dbReference type="BRENDA" id="3.2.2.22">
    <property type="organism ID" value="14080"/>
</dbReference>
<dbReference type="Reactome" id="R-HSA-5336415">
    <property type="pathway name" value="Uptake and function of diphtheria toxin"/>
</dbReference>
<dbReference type="EvolutionaryTrace" id="P00588"/>
<dbReference type="GO" id="GO:0005576">
    <property type="term" value="C:extracellular region"/>
    <property type="evidence" value="ECO:0000304"/>
    <property type="project" value="Reactome"/>
</dbReference>
<dbReference type="GO" id="GO:0005615">
    <property type="term" value="C:extracellular space"/>
    <property type="evidence" value="ECO:0007669"/>
    <property type="project" value="InterPro"/>
</dbReference>
<dbReference type="GO" id="GO:0005886">
    <property type="term" value="C:plasma membrane"/>
    <property type="evidence" value="ECO:0000304"/>
    <property type="project" value="Reactome"/>
</dbReference>
<dbReference type="GO" id="GO:0042802">
    <property type="term" value="F:identical protein binding"/>
    <property type="evidence" value="ECO:0000353"/>
    <property type="project" value="IntAct"/>
</dbReference>
<dbReference type="GO" id="GO:0047286">
    <property type="term" value="F:NAD+-diphthamide ADP-ribosyltransferase activity"/>
    <property type="evidence" value="ECO:0000269"/>
    <property type="project" value="Reactome"/>
</dbReference>
<dbReference type="GO" id="GO:0016779">
    <property type="term" value="F:nucleotidyltransferase activity"/>
    <property type="evidence" value="ECO:0007669"/>
    <property type="project" value="UniProtKB-KW"/>
</dbReference>
<dbReference type="GO" id="GO:0008320">
    <property type="term" value="F:protein transmembrane transporter activity"/>
    <property type="evidence" value="ECO:0000304"/>
    <property type="project" value="Reactome"/>
</dbReference>
<dbReference type="GO" id="GO:0090729">
    <property type="term" value="F:toxin activity"/>
    <property type="evidence" value="ECO:0007669"/>
    <property type="project" value="UniProtKB-KW"/>
</dbReference>
<dbReference type="FunFam" id="1.10.490.40:FF:000001">
    <property type="entry name" value="Diphtheria toxin"/>
    <property type="match status" value="1"/>
</dbReference>
<dbReference type="FunFam" id="2.60.40.700:FF:000001">
    <property type="entry name" value="Diphtheria toxin"/>
    <property type="match status" value="1"/>
</dbReference>
<dbReference type="Gene3D" id="3.90.175.10">
    <property type="entry name" value="Diphtheria Toxin, domain 1"/>
    <property type="match status" value="1"/>
</dbReference>
<dbReference type="Gene3D" id="2.60.40.700">
    <property type="entry name" value="Diphtheria toxin, receptor-binding domain"/>
    <property type="match status" value="1"/>
</dbReference>
<dbReference type="Gene3D" id="1.10.490.40">
    <property type="entry name" value="Diphtheria toxin, translocation domain"/>
    <property type="match status" value="1"/>
</dbReference>
<dbReference type="InterPro" id="IPR036799">
    <property type="entry name" value="Diphtheria_tox_rcpt-bd_dom_sf"/>
</dbReference>
<dbReference type="InterPro" id="IPR036801">
    <property type="entry name" value="Diphtheria_tox_transloc_sf"/>
</dbReference>
<dbReference type="InterPro" id="IPR000512">
    <property type="entry name" value="Diphtheria_toxin"/>
</dbReference>
<dbReference type="InterPro" id="IPR022406">
    <property type="entry name" value="Diphtheria_toxin_catalytic_dom"/>
</dbReference>
<dbReference type="InterPro" id="IPR022404">
    <property type="entry name" value="Diphtheria_toxin_rcpt-bd_dom"/>
</dbReference>
<dbReference type="Pfam" id="PF02763">
    <property type="entry name" value="Diphtheria_C"/>
    <property type="match status" value="1"/>
</dbReference>
<dbReference type="Pfam" id="PF01324">
    <property type="entry name" value="Diphtheria_R"/>
    <property type="match status" value="1"/>
</dbReference>
<dbReference type="Pfam" id="PF02764">
    <property type="entry name" value="Diphtheria_T"/>
    <property type="match status" value="1"/>
</dbReference>
<dbReference type="PIRSF" id="PIRSF000490">
    <property type="entry name" value="Diphtheria_toxin"/>
    <property type="match status" value="1"/>
</dbReference>
<dbReference type="PRINTS" id="PR00769">
    <property type="entry name" value="DPTHRIATOXIN"/>
</dbReference>
<dbReference type="SUPFAM" id="SSF56399">
    <property type="entry name" value="ADP-ribosylation"/>
    <property type="match status" value="1"/>
</dbReference>
<dbReference type="SUPFAM" id="SSF49380">
    <property type="entry name" value="Diphtheria toxin, C-terminal domain"/>
    <property type="match status" value="1"/>
</dbReference>
<dbReference type="SUPFAM" id="SSF56845">
    <property type="entry name" value="Diphtheria toxin, middle domain"/>
    <property type="match status" value="1"/>
</dbReference>
<proteinExistence type="evidence at protein level"/>
<organismHost>
    <name type="scientific">Corynebacterium diphtheriae</name>
    <dbReference type="NCBI Taxonomy" id="1717"/>
</organismHost>
<keyword id="KW-0002">3D-structure</keyword>
<keyword id="KW-0165">Cleavage on pair of basic residues</keyword>
<keyword id="KW-0903">Direct protein sequencing</keyword>
<keyword id="KW-1015">Disulfide bond</keyword>
<keyword id="KW-0328">Glycosyltransferase</keyword>
<keyword id="KW-0520">NAD</keyword>
<keyword id="KW-0548">Nucleotidyltransferase</keyword>
<keyword id="KW-0732">Signal</keyword>
<keyword id="KW-0800">Toxin</keyword>
<keyword id="KW-0808">Transferase</keyword>
<comment type="function">
    <text evidence="1 2">Diphtheria toxin, produced by a phage infecting Corynebacterium diphtheriae, is a proenzyme that, after activation, catalyzes the covalent attachment of the ADP ribose moiety of NAD to eukaryotic elongation factor 2 (eEF-2). Fragment A is the catalytic portion responsible for enzymatic ADP-ribosylation of elongation factor 2, while fragment B is responsible for binding of toxin to cell receptors and entry of fragment A.</text>
</comment>
<comment type="catalytic activity">
    <reaction>
        <text>diphthamide-[translation elongation factor 2] + NAD(+) = N-(ADP-D-ribosyl)diphthamide-[translation elongation factor 2] + nicotinamide + H(+)</text>
        <dbReference type="Rhea" id="RHEA:11820"/>
        <dbReference type="Rhea" id="RHEA-COMP:10174"/>
        <dbReference type="Rhea" id="RHEA-COMP:10175"/>
        <dbReference type="ChEBI" id="CHEBI:15378"/>
        <dbReference type="ChEBI" id="CHEBI:16692"/>
        <dbReference type="ChEBI" id="CHEBI:17154"/>
        <dbReference type="ChEBI" id="CHEBI:57540"/>
        <dbReference type="ChEBI" id="CHEBI:82697"/>
        <dbReference type="EC" id="2.4.2.36"/>
    </reaction>
</comment>
<comment type="activity regulation">
    <text evidence="2">Partially inhibited by 1,8-naphthalimide (NAP).</text>
</comment>
<comment type="subunit">
    <text>Homodimer.</text>
</comment>
<comment type="interaction">
    <interactant intactId="EBI-15975409">
        <id>P00588</id>
    </interactant>
    <interactant intactId="EBI-15975409">
        <id>P00588</id>
        <label>-</label>
    </interactant>
    <organismsDiffer>false</organismsDiffer>
    <experiments>2</experiments>
</comment>
<comment type="PTM">
    <text evidence="4">Proteolytic activation by host furin cleaves the protein in two parts, Diphtheria toxin fragment A and Diphtheria toxin fragment B; which remain associated via a disulfide bond.</text>
</comment>
<comment type="sequence caution" evidence="5">
    <conflict type="erroneous initiation">
        <sequence resource="EMBL-CDS" id="AAA32182"/>
    </conflict>
    <text>Truncated N-terminus.</text>
</comment>
<feature type="signal peptide" evidence="3">
    <location>
        <begin position="1"/>
        <end position="32"/>
    </location>
</feature>
<feature type="chain" id="PRO_0000019345" description="Diphtheria toxin fragment A">
    <location>
        <begin position="33"/>
        <end position="225"/>
    </location>
</feature>
<feature type="chain" id="PRO_0000019346" description="Diphtheria toxin fragment B">
    <location>
        <begin position="226"/>
        <end position="567"/>
    </location>
</feature>
<feature type="active site">
    <location>
        <position position="180"/>
    </location>
</feature>
<feature type="binding site">
    <location>
        <position position="53"/>
    </location>
    <ligand>
        <name>NAD(+)</name>
        <dbReference type="ChEBI" id="CHEBI:57540"/>
    </ligand>
</feature>
<feature type="binding site">
    <location>
        <position position="97"/>
    </location>
    <ligand>
        <name>NAD(+)</name>
        <dbReference type="ChEBI" id="CHEBI:57540"/>
    </ligand>
</feature>
<feature type="site" description="Modification inactivates enzyme">
    <location>
        <position position="185"/>
    </location>
</feature>
<feature type="site" description="Cleavage; by furin" evidence="4">
    <location>
        <begin position="225"/>
        <end position="226"/>
    </location>
</feature>
<feature type="disulfide bond">
    <location>
        <begin position="218"/>
        <end position="233"/>
    </location>
</feature>
<feature type="disulfide bond">
    <location>
        <begin position="493"/>
        <end position="503"/>
    </location>
</feature>
<feature type="mutagenesis site" description="Loss of toxicity." evidence="2">
    <original>E</original>
    <variation>A</variation>
    <location>
        <position position="180"/>
    </location>
</feature>
<feature type="sequence conflict" description="In Ref. 2; AA sequence." evidence="5" ref="2">
    <original>SVE</original>
    <variation>VES</variation>
    <location>
        <begin position="178"/>
        <end position="180"/>
    </location>
</feature>
<feature type="helix" evidence="7">
    <location>
        <begin position="34"/>
        <end position="37"/>
    </location>
</feature>
<feature type="helix" evidence="7">
    <location>
        <begin position="40"/>
        <end position="42"/>
    </location>
</feature>
<feature type="strand" evidence="7">
    <location>
        <begin position="44"/>
        <end position="47"/>
    </location>
</feature>
<feature type="strand" evidence="7">
    <location>
        <begin position="50"/>
        <end position="55"/>
    </location>
</feature>
<feature type="turn" evidence="8">
    <location>
        <begin position="57"/>
        <end position="61"/>
    </location>
</feature>
<feature type="helix" evidence="7">
    <location>
        <begin position="62"/>
        <end position="65"/>
    </location>
</feature>
<feature type="strand" evidence="7">
    <location>
        <begin position="71"/>
        <end position="73"/>
    </location>
</feature>
<feature type="helix" evidence="7">
    <location>
        <begin position="80"/>
        <end position="82"/>
    </location>
</feature>
<feature type="strand" evidence="7">
    <location>
        <begin position="84"/>
        <end position="89"/>
    </location>
</feature>
<feature type="helix" evidence="7">
    <location>
        <begin position="91"/>
        <end position="95"/>
    </location>
</feature>
<feature type="strand" evidence="9">
    <location>
        <begin position="101"/>
        <end position="103"/>
    </location>
</feature>
<feature type="turn" evidence="7">
    <location>
        <begin position="104"/>
        <end position="106"/>
    </location>
</feature>
<feature type="strand" evidence="7">
    <location>
        <begin position="111"/>
        <end position="116"/>
    </location>
</feature>
<feature type="strand" evidence="7">
    <location>
        <begin position="118"/>
        <end position="127"/>
    </location>
</feature>
<feature type="helix" evidence="7">
    <location>
        <begin position="131"/>
        <end position="137"/>
    </location>
</feature>
<feature type="strand" evidence="10">
    <location>
        <begin position="142"/>
        <end position="144"/>
    </location>
</feature>
<feature type="helix" evidence="7">
    <location>
        <begin position="146"/>
        <end position="150"/>
    </location>
</feature>
<feature type="helix" evidence="7">
    <location>
        <begin position="153"/>
        <end position="159"/>
    </location>
</feature>
<feature type="strand" evidence="6">
    <location>
        <begin position="160"/>
        <end position="162"/>
    </location>
</feature>
<feature type="strand" evidence="7">
    <location>
        <begin position="164"/>
        <end position="171"/>
    </location>
</feature>
<feature type="strand" evidence="7">
    <location>
        <begin position="179"/>
        <end position="183"/>
    </location>
</feature>
<feature type="helix" evidence="7">
    <location>
        <begin position="187"/>
        <end position="190"/>
    </location>
</feature>
<feature type="strand" evidence="7">
    <location>
        <begin position="192"/>
        <end position="198"/>
    </location>
</feature>
<feature type="helix" evidence="7">
    <location>
        <begin position="199"/>
        <end position="202"/>
    </location>
</feature>
<feature type="helix" evidence="7">
    <location>
        <begin position="208"/>
        <end position="215"/>
    </location>
</feature>
<feature type="helix" evidence="7">
    <location>
        <begin position="216"/>
        <end position="218"/>
    </location>
</feature>
<feature type="helix" evidence="7">
    <location>
        <begin position="238"/>
        <end position="253"/>
    </location>
</feature>
<feature type="helix" evidence="7">
    <location>
        <begin position="256"/>
        <end position="263"/>
    </location>
</feature>
<feature type="helix" evidence="7">
    <location>
        <begin position="272"/>
        <end position="286"/>
    </location>
</feature>
<feature type="helix" evidence="7">
    <location>
        <begin position="290"/>
        <end position="292"/>
    </location>
</feature>
<feature type="helix" evidence="7">
    <location>
        <begin position="293"/>
        <end position="299"/>
    </location>
</feature>
<feature type="helix" evidence="7">
    <location>
        <begin position="303"/>
        <end position="305"/>
    </location>
</feature>
<feature type="helix" evidence="7">
    <location>
        <begin position="307"/>
        <end position="320"/>
    </location>
</feature>
<feature type="helix" evidence="7">
    <location>
        <begin position="323"/>
        <end position="326"/>
    </location>
</feature>
<feature type="helix" evidence="7">
    <location>
        <begin position="329"/>
        <end position="336"/>
    </location>
</feature>
<feature type="helix" evidence="7">
    <location>
        <begin position="342"/>
        <end position="346"/>
    </location>
</feature>
<feature type="helix" evidence="7">
    <location>
        <begin position="358"/>
        <end position="379"/>
    </location>
</feature>
<feature type="turn" evidence="7">
    <location>
        <begin position="387"/>
        <end position="390"/>
    </location>
</feature>
<feature type="helix" evidence="7">
    <location>
        <begin position="391"/>
        <end position="407"/>
    </location>
</feature>
<feature type="strand" evidence="7">
    <location>
        <begin position="421"/>
        <end position="423"/>
    </location>
</feature>
<feature type="strand" evidence="7">
    <location>
        <begin position="426"/>
        <end position="432"/>
    </location>
</feature>
<feature type="helix" evidence="7">
    <location>
        <begin position="433"/>
        <end position="436"/>
    </location>
</feature>
<feature type="strand" evidence="7">
    <location>
        <begin position="437"/>
        <end position="439"/>
    </location>
</feature>
<feature type="strand" evidence="7">
    <location>
        <begin position="444"/>
        <end position="457"/>
    </location>
</feature>
<feature type="strand" evidence="7">
    <location>
        <begin position="459"/>
        <end position="461"/>
    </location>
</feature>
<feature type="strand" evidence="7">
    <location>
        <begin position="463"/>
        <end position="467"/>
    </location>
</feature>
<feature type="turn" evidence="7">
    <location>
        <begin position="470"/>
        <end position="472"/>
    </location>
</feature>
<feature type="strand" evidence="7">
    <location>
        <begin position="473"/>
        <end position="475"/>
    </location>
</feature>
<feature type="turn" evidence="7">
    <location>
        <begin position="477"/>
        <end position="479"/>
    </location>
</feature>
<feature type="strand" evidence="7">
    <location>
        <begin position="481"/>
        <end position="484"/>
    </location>
</feature>
<feature type="strand" evidence="7">
    <location>
        <begin position="487"/>
        <end position="489"/>
    </location>
</feature>
<feature type="strand" evidence="7">
    <location>
        <begin position="491"/>
        <end position="496"/>
    </location>
</feature>
<feature type="turn" evidence="7">
    <location>
        <begin position="497"/>
        <end position="499"/>
    </location>
</feature>
<feature type="strand" evidence="7">
    <location>
        <begin position="500"/>
        <end position="507"/>
    </location>
</feature>
<feature type="strand" evidence="7">
    <location>
        <begin position="509"/>
        <end position="512"/>
    </location>
</feature>
<feature type="strand" evidence="7">
    <location>
        <begin position="517"/>
        <end position="525"/>
    </location>
</feature>
<feature type="turn" evidence="7">
    <location>
        <begin position="533"/>
        <end position="535"/>
    </location>
</feature>
<feature type="strand" evidence="7">
    <location>
        <begin position="540"/>
        <end position="550"/>
    </location>
</feature>
<feature type="strand" evidence="7">
    <location>
        <begin position="553"/>
        <end position="562"/>
    </location>
</feature>
<feature type="strand" evidence="7">
    <location>
        <begin position="564"/>
        <end position="566"/>
    </location>
</feature>
<organism>
    <name type="scientific">Corynephage beta</name>
    <dbReference type="NCBI Taxonomy" id="10703"/>
    <lineage>
        <taxon>Viruses</taxon>
        <taxon>Duplodnaviria</taxon>
        <taxon>Heunggongvirae</taxon>
        <taxon>Uroviricota</taxon>
        <taxon>Caudoviricetes</taxon>
        <taxon>Lambdavirus</taxon>
    </lineage>
</organism>